<gene>
    <name evidence="1" type="primary">rnp3</name>
    <name type="ordered locus">MmarC7_1427</name>
</gene>
<protein>
    <recommendedName>
        <fullName evidence="1">Ribonuclease P protein component 3</fullName>
        <shortName evidence="1">RNase P component 3</shortName>
        <ecNumber evidence="1">3.1.26.5</ecNumber>
    </recommendedName>
    <alternativeName>
        <fullName evidence="1">Rpp30</fullName>
    </alternativeName>
</protein>
<organism>
    <name type="scientific">Methanococcus maripaludis (strain C7 / ATCC BAA-1331)</name>
    <dbReference type="NCBI Taxonomy" id="426368"/>
    <lineage>
        <taxon>Archaea</taxon>
        <taxon>Methanobacteriati</taxon>
        <taxon>Methanobacteriota</taxon>
        <taxon>Methanomada group</taxon>
        <taxon>Methanococci</taxon>
        <taxon>Methanococcales</taxon>
        <taxon>Methanococcaceae</taxon>
        <taxon>Methanococcus</taxon>
    </lineage>
</organism>
<keyword id="KW-0963">Cytoplasm</keyword>
<keyword id="KW-0255">Endonuclease</keyword>
<keyword id="KW-0378">Hydrolase</keyword>
<keyword id="KW-0540">Nuclease</keyword>
<keyword id="KW-0819">tRNA processing</keyword>
<proteinExistence type="inferred from homology"/>
<evidence type="ECO:0000255" key="1">
    <source>
        <dbReference type="HAMAP-Rule" id="MF_00756"/>
    </source>
</evidence>
<comment type="function">
    <text evidence="1">Part of ribonuclease P, a protein complex that generates mature tRNA molecules by cleaving their 5'-ends.</text>
</comment>
<comment type="catalytic activity">
    <reaction evidence="1">
        <text>Endonucleolytic cleavage of RNA, removing 5'-extranucleotides from tRNA precursor.</text>
        <dbReference type="EC" id="3.1.26.5"/>
    </reaction>
</comment>
<comment type="subunit">
    <text evidence="1">Consists of a catalytic RNA component and at least 4-5 protein subunits.</text>
</comment>
<comment type="subcellular location">
    <subcellularLocation>
        <location evidence="1">Cytoplasm</location>
    </subcellularLocation>
</comment>
<comment type="similarity">
    <text evidence="1">Belongs to the eukaryotic/archaeal RNase P protein component 3 family.</text>
</comment>
<name>RNP3_METM7</name>
<accession>A6VJ64</accession>
<reference key="1">
    <citation type="submission" date="2007-06" db="EMBL/GenBank/DDBJ databases">
        <title>Complete sequence of Methanococcus maripaludis C7.</title>
        <authorList>
            <consortium name="US DOE Joint Genome Institute"/>
            <person name="Copeland A."/>
            <person name="Lucas S."/>
            <person name="Lapidus A."/>
            <person name="Barry K."/>
            <person name="Glavina del Rio T."/>
            <person name="Dalin E."/>
            <person name="Tice H."/>
            <person name="Pitluck S."/>
            <person name="Clum A."/>
            <person name="Schmutz J."/>
            <person name="Larimer F."/>
            <person name="Land M."/>
            <person name="Hauser L."/>
            <person name="Kyrpides N."/>
            <person name="Anderson I."/>
            <person name="Sieprawska-Lupa M."/>
            <person name="Whitman W.B."/>
            <person name="Richardson P."/>
        </authorList>
    </citation>
    <scope>NUCLEOTIDE SEQUENCE [LARGE SCALE GENOMIC DNA]</scope>
    <source>
        <strain>C7 / ATCC BAA-1331</strain>
    </source>
</reference>
<feature type="chain" id="PRO_1000046628" description="Ribonuclease P protein component 3">
    <location>
        <begin position="1"/>
        <end position="232"/>
    </location>
</feature>
<dbReference type="EC" id="3.1.26.5" evidence="1"/>
<dbReference type="EMBL" id="CP000745">
    <property type="protein sequence ID" value="ABR66490.1"/>
    <property type="molecule type" value="Genomic_DNA"/>
</dbReference>
<dbReference type="SMR" id="A6VJ64"/>
<dbReference type="STRING" id="426368.MmarC7_1427"/>
<dbReference type="KEGG" id="mmz:MmarC7_1427"/>
<dbReference type="eggNOG" id="arCOG00307">
    <property type="taxonomic scope" value="Archaea"/>
</dbReference>
<dbReference type="HOGENOM" id="CLU_074509_0_0_2"/>
<dbReference type="OrthoDB" id="85765at2157"/>
<dbReference type="GO" id="GO:0005737">
    <property type="term" value="C:cytoplasm"/>
    <property type="evidence" value="ECO:0007669"/>
    <property type="project" value="UniProtKB-SubCell"/>
</dbReference>
<dbReference type="GO" id="GO:0030677">
    <property type="term" value="C:ribonuclease P complex"/>
    <property type="evidence" value="ECO:0007669"/>
    <property type="project" value="UniProtKB-UniRule"/>
</dbReference>
<dbReference type="GO" id="GO:0004526">
    <property type="term" value="F:ribonuclease P activity"/>
    <property type="evidence" value="ECO:0007669"/>
    <property type="project" value="UniProtKB-UniRule"/>
</dbReference>
<dbReference type="GO" id="GO:0001682">
    <property type="term" value="P:tRNA 5'-leader removal"/>
    <property type="evidence" value="ECO:0007669"/>
    <property type="project" value="UniProtKB-UniRule"/>
</dbReference>
<dbReference type="FunFam" id="3.20.20.140:FF:000196">
    <property type="entry name" value="Ribonuclease P protein component 3"/>
    <property type="match status" value="1"/>
</dbReference>
<dbReference type="Gene3D" id="3.20.20.140">
    <property type="entry name" value="Metal-dependent hydrolases"/>
    <property type="match status" value="1"/>
</dbReference>
<dbReference type="HAMAP" id="MF_00756">
    <property type="entry name" value="RNase_P_3"/>
    <property type="match status" value="1"/>
</dbReference>
<dbReference type="InterPro" id="IPR016195">
    <property type="entry name" value="Pol/histidinol_Pase-like"/>
</dbReference>
<dbReference type="InterPro" id="IPR023539">
    <property type="entry name" value="RNase_P_comp-3_arc"/>
</dbReference>
<dbReference type="InterPro" id="IPR002738">
    <property type="entry name" value="RNase_P_p30"/>
</dbReference>
<dbReference type="NCBIfam" id="NF046108">
    <property type="entry name" value="RNaseP3Mthcoc"/>
    <property type="match status" value="1"/>
</dbReference>
<dbReference type="Pfam" id="PF01876">
    <property type="entry name" value="RNase_P_p30"/>
    <property type="match status" value="1"/>
</dbReference>
<dbReference type="SUPFAM" id="SSF89550">
    <property type="entry name" value="PHP domain-like"/>
    <property type="match status" value="1"/>
</dbReference>
<sequence>MLEGIFDINHIFDEDGIKTLKRFGWDGSVAVQNHNEYSEEIINSAVEYGEKHDFKVFSGVKISTKNQNEMEKAVKKYRNKADILLVEGGDIKINRRVLEMNDVDILSTPELNRMDNGLDHILARLGSTNRVAIELNFGNLLKSRNYDRSKILWAFQRNLKLAKKYDTPVVISSGASDIYGIKAPGDLRGFLNTVTDPLYSKKIMETTSKIIDYRLYLKKDTVLTLGIEIVEE</sequence>